<name>CL050_MACFA</name>
<sequence>MEMQQNCSISCFWETQPLGCVKISCIFYHSKPRNINGLFLPPSSNITLQKESQEGIPLQTQSQEPLKPQENISRPIHHPLVLKTNFEEEEEVDEQNDASSLWTKTPEEIEEKRAIKEMCYKSGEYYRFHTPPDILSSKSMAPTAEKELEKPLENGSELQEGDSLTVPTKLSQYERQGEIKTSLHGKPKTDIAAFENGGGDCYVPQRVIFLGVDESEALTEEKEITISKCSNTKDNKDSPHPKRSLTTRLVPTTHVLNATENISMKCREDPSSMNDVQPVKKPHFKGVKKRKWIYDEPKNFPDSGMRRAVQTPSPQNKMSYHRNNKNRNAENASYIHVQRDAVRTVALNAPPHSRPMHGSYNKVHVNKEPKPNLSPDKYMSTSYNDSAWRKRIPFSKTYSKSGKIYPEPRRNGSK</sequence>
<proteinExistence type="evidence at transcript level"/>
<evidence type="ECO:0000256" key="1">
    <source>
        <dbReference type="SAM" id="MobiDB-lite"/>
    </source>
</evidence>
<evidence type="ECO:0000303" key="2">
    <source>
    </source>
</evidence>
<organism>
    <name type="scientific">Macaca fascicularis</name>
    <name type="common">Crab-eating macaque</name>
    <name type="synonym">Cynomolgus monkey</name>
    <dbReference type="NCBI Taxonomy" id="9541"/>
    <lineage>
        <taxon>Eukaryota</taxon>
        <taxon>Metazoa</taxon>
        <taxon>Chordata</taxon>
        <taxon>Craniata</taxon>
        <taxon>Vertebrata</taxon>
        <taxon>Euteleostomi</taxon>
        <taxon>Mammalia</taxon>
        <taxon>Eutheria</taxon>
        <taxon>Euarchontoglires</taxon>
        <taxon>Primates</taxon>
        <taxon>Haplorrhini</taxon>
        <taxon>Catarrhini</taxon>
        <taxon>Cercopithecidae</taxon>
        <taxon>Cercopithecinae</taxon>
        <taxon>Macaca</taxon>
    </lineage>
</organism>
<reference key="1">
    <citation type="journal article" date="2002" name="BMC Genomics">
        <title>Cynomolgus monkey testicular cDNAs for discovery of novel human genes in the human genome sequence.</title>
        <authorList>
            <person name="Osada N."/>
            <person name="Hida M."/>
            <person name="Kusuda J."/>
            <person name="Tanuma R."/>
            <person name="Hirata M."/>
            <person name="Suto Y."/>
            <person name="Hirai M."/>
            <person name="Terao K."/>
            <person name="Sugano S."/>
            <person name="Hashimoto K."/>
        </authorList>
    </citation>
    <scope>NUCLEOTIDE SEQUENCE [LARGE SCALE MRNA] (ISOFORMS 2 AND 3)</scope>
    <source>
        <tissue>Testis</tissue>
    </source>
</reference>
<accession>Q4R731</accession>
<accession>Q95JQ0</accession>
<keyword id="KW-0025">Alternative splicing</keyword>
<keyword id="KW-1185">Reference proteome</keyword>
<feature type="chain" id="PRO_0000295235" description="Uncharacterized protein C12orf50 homolog">
    <location>
        <begin position="1"/>
        <end position="414"/>
    </location>
</feature>
<feature type="region of interest" description="Disordered" evidence="1">
    <location>
        <begin position="136"/>
        <end position="168"/>
    </location>
</feature>
<feature type="region of interest" description="Disordered" evidence="1">
    <location>
        <begin position="298"/>
        <end position="322"/>
    </location>
</feature>
<feature type="region of interest" description="Disordered" evidence="1">
    <location>
        <begin position="350"/>
        <end position="382"/>
    </location>
</feature>
<feature type="splice variant" id="VSP_026850" description="In isoform 3." evidence="2">
    <location>
        <begin position="1"/>
        <end position="84"/>
    </location>
</feature>
<feature type="splice variant" id="VSP_026851" description="In isoform 3." evidence="2">
    <original>NFEEEEE</original>
    <variation>MDYFCHQ</variation>
    <location>
        <begin position="85"/>
        <end position="91"/>
    </location>
</feature>
<feature type="splice variant" id="VSP_026852" description="In isoform 2." evidence="2">
    <original>DNKDSPHPKRSLTTRLVPTTHVLNATENISMKCREDPSSM</original>
    <variation>V</variation>
    <location>
        <begin position="234"/>
        <end position="273"/>
    </location>
</feature>
<comment type="alternative products">
    <event type="alternative splicing"/>
    <isoform>
        <id>Q4R731-1</id>
        <name>1</name>
        <sequence type="displayed"/>
    </isoform>
    <isoform>
        <id>Q4R731-2</id>
        <name>2</name>
        <sequence type="described" ref="VSP_026852"/>
    </isoform>
    <isoform>
        <id>Q4R731-3</id>
        <name>3</name>
        <sequence type="described" ref="VSP_026850 VSP_026851"/>
    </isoform>
</comment>
<dbReference type="EMBL" id="AB070130">
    <property type="protein sequence ID" value="BAB63075.1"/>
    <property type="molecule type" value="mRNA"/>
</dbReference>
<dbReference type="EMBL" id="AB168998">
    <property type="protein sequence ID" value="BAE01093.1"/>
    <property type="molecule type" value="mRNA"/>
</dbReference>
<dbReference type="RefSeq" id="XP_005571871.1">
    <molecule id="Q4R731-1"/>
    <property type="nucleotide sequence ID" value="XM_005571814.2"/>
</dbReference>
<dbReference type="RefSeq" id="XP_005571872.1">
    <molecule id="Q4R731-2"/>
    <property type="nucleotide sequence ID" value="XM_005571815.2"/>
</dbReference>
<dbReference type="RefSeq" id="XP_015286859.1">
    <property type="nucleotide sequence ID" value="XM_015431373.1"/>
</dbReference>
<dbReference type="STRING" id="9541.ENSMFAP00000044622"/>
<dbReference type="GeneID" id="102130604"/>
<dbReference type="KEGG" id="mcf:102130604"/>
<dbReference type="CTD" id="100354679"/>
<dbReference type="VEuPathDB" id="HostDB:ENSMFAG00000039647"/>
<dbReference type="eggNOG" id="KOG4791">
    <property type="taxonomic scope" value="Eukaryota"/>
</dbReference>
<dbReference type="OMA" id="AIRDICY"/>
<dbReference type="Proteomes" id="UP000233100">
    <property type="component" value="Chromosome 11"/>
</dbReference>
<dbReference type="GO" id="GO:0016973">
    <property type="term" value="P:poly(A)+ mRNA export from nucleus"/>
    <property type="evidence" value="ECO:0007669"/>
    <property type="project" value="TreeGrafter"/>
</dbReference>
<dbReference type="InterPro" id="IPR040943">
    <property type="entry name" value="DUF5571"/>
</dbReference>
<dbReference type="InterPro" id="IPR041686">
    <property type="entry name" value="Znf-CCCH_3"/>
</dbReference>
<dbReference type="PANTHER" id="PTHR15725:SF1">
    <property type="entry name" value="RIKEN CDNA 1700017N19 GENE"/>
    <property type="match status" value="1"/>
</dbReference>
<dbReference type="PANTHER" id="PTHR15725">
    <property type="entry name" value="ZN-FINGER, C-X8-C-X5-C-X3-H TYPE-CONTAINING"/>
    <property type="match status" value="1"/>
</dbReference>
<dbReference type="Pfam" id="PF17732">
    <property type="entry name" value="DUF5571"/>
    <property type="match status" value="1"/>
</dbReference>
<dbReference type="Pfam" id="PF15663">
    <property type="entry name" value="zf-CCCH_3"/>
    <property type="match status" value="1"/>
</dbReference>
<protein>
    <recommendedName>
        <fullName>Uncharacterized protein C12orf50 homolog</fullName>
    </recommendedName>
</protein>
<gene>
    <name type="ORF">QtsA-14622</name>
    <name type="ORF">QtsA-16454</name>
</gene>